<sequence length="192" mass="21495">MAKATTIKEALVKWEEKTGEKANDATAVKLYGQIPPIEKMDASLSNLVNCERLSLSTNCIEKIANLNGLKNLKILSLGRNNIKNLNGLEAVGDTLEELWISYNLIEKLKGIHVMKKLKVLYMSNNLVKEWGEFLKLADLPSLVDLVFVGNPLEEKYSADGNWIEEATKRLPKLKKLDGNPVIKQEEETEGES</sequence>
<gene>
    <name type="primary">dnal1</name>
    <name type="ORF">zgc:92542</name>
</gene>
<name>DNAL1_DANRE</name>
<reference key="1">
    <citation type="submission" date="2004-07" db="EMBL/GenBank/DDBJ databases">
        <authorList>
            <consortium name="NIH - Zebrafish Gene Collection (ZGC) project"/>
        </authorList>
    </citation>
    <scope>NUCLEOTIDE SEQUENCE [LARGE SCALE MRNA]</scope>
</reference>
<dbReference type="EMBL" id="BC076064">
    <property type="protein sequence ID" value="AAH76064.1"/>
    <property type="molecule type" value="mRNA"/>
</dbReference>
<dbReference type="RefSeq" id="NP_001003442.1">
    <property type="nucleotide sequence ID" value="NM_001003442.1"/>
</dbReference>
<dbReference type="SMR" id="Q6DHB1"/>
<dbReference type="FunCoup" id="Q6DHB1">
    <property type="interactions" value="163"/>
</dbReference>
<dbReference type="STRING" id="7955.ENSDARP00000043650"/>
<dbReference type="PaxDb" id="7955-ENSDARP00000043650"/>
<dbReference type="Ensembl" id="ENSDART00000043651">
    <property type="protein sequence ID" value="ENSDARP00000043650"/>
    <property type="gene ID" value="ENSDARG00000034042"/>
</dbReference>
<dbReference type="Ensembl" id="ENSDART00000188500">
    <property type="protein sequence ID" value="ENSDARP00000145599"/>
    <property type="gene ID" value="ENSDARG00000097505"/>
</dbReference>
<dbReference type="GeneID" id="445048"/>
<dbReference type="KEGG" id="dre:445048"/>
<dbReference type="AGR" id="ZFIN:ZDB-GENE-040801-178"/>
<dbReference type="CTD" id="83544"/>
<dbReference type="ZFIN" id="ZDB-GENE-040801-178">
    <property type="gene designation" value="dnal1"/>
</dbReference>
<dbReference type="eggNOG" id="KOG0531">
    <property type="taxonomic scope" value="Eukaryota"/>
</dbReference>
<dbReference type="HOGENOM" id="CLU_092189_0_0_1"/>
<dbReference type="InParanoid" id="Q6DHB1"/>
<dbReference type="OMA" id="NCERISM"/>
<dbReference type="OrthoDB" id="266138at2759"/>
<dbReference type="PhylomeDB" id="Q6DHB1"/>
<dbReference type="PRO" id="PR:Q6DHB1"/>
<dbReference type="Proteomes" id="UP000000437">
    <property type="component" value="Chromosome 17"/>
</dbReference>
<dbReference type="Bgee" id="ENSDARG00000034042">
    <property type="expression patterns" value="Expressed in testis and 19 other cell types or tissues"/>
</dbReference>
<dbReference type="GO" id="GO:0042995">
    <property type="term" value="C:cell projection"/>
    <property type="evidence" value="ECO:0007669"/>
    <property type="project" value="UniProtKB-KW"/>
</dbReference>
<dbReference type="GO" id="GO:0005737">
    <property type="term" value="C:cytoplasm"/>
    <property type="evidence" value="ECO:0000318"/>
    <property type="project" value="GO_Central"/>
</dbReference>
<dbReference type="GO" id="GO:0030286">
    <property type="term" value="C:dynein complex"/>
    <property type="evidence" value="ECO:0007669"/>
    <property type="project" value="UniProtKB-KW"/>
</dbReference>
<dbReference type="GO" id="GO:0005874">
    <property type="term" value="C:microtubule"/>
    <property type="evidence" value="ECO:0007669"/>
    <property type="project" value="UniProtKB-KW"/>
</dbReference>
<dbReference type="GO" id="GO:0043014">
    <property type="term" value="F:alpha-tubulin binding"/>
    <property type="evidence" value="ECO:0000318"/>
    <property type="project" value="GO_Central"/>
</dbReference>
<dbReference type="GO" id="GO:0045504">
    <property type="term" value="F:dynein heavy chain binding"/>
    <property type="evidence" value="ECO:0000318"/>
    <property type="project" value="GO_Central"/>
</dbReference>
<dbReference type="GO" id="GO:0036158">
    <property type="term" value="P:outer dynein arm assembly"/>
    <property type="evidence" value="ECO:0000318"/>
    <property type="project" value="GO_Central"/>
</dbReference>
<dbReference type="FunFam" id="3.80.10.10:FF:000049">
    <property type="entry name" value="Dynein light chain 1"/>
    <property type="match status" value="1"/>
</dbReference>
<dbReference type="Gene3D" id="3.80.10.10">
    <property type="entry name" value="Ribonuclease Inhibitor"/>
    <property type="match status" value="1"/>
</dbReference>
<dbReference type="InterPro" id="IPR001611">
    <property type="entry name" value="Leu-rich_rpt"/>
</dbReference>
<dbReference type="InterPro" id="IPR025875">
    <property type="entry name" value="Leu-rich_rpt_4"/>
</dbReference>
<dbReference type="InterPro" id="IPR032675">
    <property type="entry name" value="LRR_dom_sf"/>
</dbReference>
<dbReference type="PANTHER" id="PTHR15454:SF73">
    <property type="entry name" value="DYNEIN AXONEMAL LIGHT CHAIN 1"/>
    <property type="match status" value="1"/>
</dbReference>
<dbReference type="PANTHER" id="PTHR15454">
    <property type="entry name" value="NISCHARIN RELATED"/>
    <property type="match status" value="1"/>
</dbReference>
<dbReference type="Pfam" id="PF12799">
    <property type="entry name" value="LRR_4"/>
    <property type="match status" value="1"/>
</dbReference>
<dbReference type="SMART" id="SM00365">
    <property type="entry name" value="LRR_SD22"/>
    <property type="match status" value="4"/>
</dbReference>
<dbReference type="SUPFAM" id="SSF52058">
    <property type="entry name" value="L domain-like"/>
    <property type="match status" value="1"/>
</dbReference>
<dbReference type="PROSITE" id="PS51450">
    <property type="entry name" value="LRR"/>
    <property type="match status" value="4"/>
</dbReference>
<organism>
    <name type="scientific">Danio rerio</name>
    <name type="common">Zebrafish</name>
    <name type="synonym">Brachydanio rerio</name>
    <dbReference type="NCBI Taxonomy" id="7955"/>
    <lineage>
        <taxon>Eukaryota</taxon>
        <taxon>Metazoa</taxon>
        <taxon>Chordata</taxon>
        <taxon>Craniata</taxon>
        <taxon>Vertebrata</taxon>
        <taxon>Euteleostomi</taxon>
        <taxon>Actinopterygii</taxon>
        <taxon>Neopterygii</taxon>
        <taxon>Teleostei</taxon>
        <taxon>Ostariophysi</taxon>
        <taxon>Cypriniformes</taxon>
        <taxon>Danionidae</taxon>
        <taxon>Danioninae</taxon>
        <taxon>Danio</taxon>
    </lineage>
</organism>
<comment type="function">
    <text evidence="1 2">Part of the multisubunit axonemal ATPase complexes that generate the force for cilia motility and govern beat frequency (By similarity). Component of the outer arm dynein (ODA). May be involved in a mechanosensory feedback mechanism controlling ODA activity based on external conformational cues by tethering the outer arm dynein heavy chain (DNAH5) to the microtubule within the axoneme (By similarity).</text>
</comment>
<comment type="subunit">
    <text evidence="1">Interacts with DNAH5, a outer arm dynein heavy chain. Interacts with tubulin located within the A-tubule of the outer doublets in a ATP-independent manner.</text>
</comment>
<comment type="subcellular location">
    <subcellularLocation>
        <location evidence="1">Cytoplasm</location>
        <location evidence="1">Cytoskeleton</location>
        <location evidence="1">Cilium axoneme</location>
    </subcellularLocation>
</comment>
<comment type="miscellaneous">
    <text evidence="2">Outer (ODAs) and inner (IDAs) dynein arms contain the molecular motors that generate the force to move cilia by ATP-dependent reactions. There are two mechanosensory systems that monitor and respond to the mechanical state (curvature) of the axoneme. One system involves the central pair microtubule complex and radial spokes and the second system involves the outer dynein arms.</text>
</comment>
<comment type="similarity">
    <text evidence="3">Belongs to the dynein light chain LC1-type family.</text>
</comment>
<keyword id="KW-0966">Cell projection</keyword>
<keyword id="KW-0963">Cytoplasm</keyword>
<keyword id="KW-0206">Cytoskeleton</keyword>
<keyword id="KW-0243">Dynein</keyword>
<keyword id="KW-0433">Leucine-rich repeat</keyword>
<keyword id="KW-0493">Microtubule</keyword>
<keyword id="KW-0505">Motor protein</keyword>
<keyword id="KW-1185">Reference proteome</keyword>
<keyword id="KW-0677">Repeat</keyword>
<evidence type="ECO:0000250" key="1">
    <source>
        <dbReference type="UniProtKB" id="Q4LDG9"/>
    </source>
</evidence>
<evidence type="ECO:0000250" key="2">
    <source>
        <dbReference type="UniProtKB" id="Q9XHH2"/>
    </source>
</evidence>
<evidence type="ECO:0000305" key="3"/>
<accession>Q6DHB1</accession>
<protein>
    <recommendedName>
        <fullName>Dynein axonemal light chain 1</fullName>
    </recommendedName>
</protein>
<proteinExistence type="evidence at transcript level"/>
<feature type="chain" id="PRO_0000281132" description="Dynein axonemal light chain 1">
    <location>
        <begin position="1"/>
        <end position="192"/>
    </location>
</feature>
<feature type="repeat" description="LRR 1">
    <location>
        <begin position="49"/>
        <end position="70"/>
    </location>
</feature>
<feature type="repeat" description="LRR 2">
    <location>
        <begin position="71"/>
        <end position="92"/>
    </location>
</feature>
<feature type="repeat" description="LRR 3">
    <location>
        <begin position="94"/>
        <end position="115"/>
    </location>
</feature>
<feature type="repeat" description="LRR 4">
    <location>
        <begin position="116"/>
        <end position="137"/>
    </location>
</feature>
<feature type="domain" description="LRRCT">
    <location>
        <begin position="150"/>
        <end position="192"/>
    </location>
</feature>